<evidence type="ECO:0000255" key="1">
    <source>
        <dbReference type="HAMAP-Rule" id="MF_03038"/>
    </source>
</evidence>
<evidence type="ECO:0000256" key="2">
    <source>
        <dbReference type="SAM" id="MobiDB-lite"/>
    </source>
</evidence>
<organism>
    <name type="scientific">Xenopus tropicalis</name>
    <name type="common">Western clawed frog</name>
    <name type="synonym">Silurana tropicalis</name>
    <dbReference type="NCBI Taxonomy" id="8364"/>
    <lineage>
        <taxon>Eukaryota</taxon>
        <taxon>Metazoa</taxon>
        <taxon>Chordata</taxon>
        <taxon>Craniata</taxon>
        <taxon>Vertebrata</taxon>
        <taxon>Euteleostomi</taxon>
        <taxon>Amphibia</taxon>
        <taxon>Batrachia</taxon>
        <taxon>Anura</taxon>
        <taxon>Pipoidea</taxon>
        <taxon>Pipidae</taxon>
        <taxon>Xenopodinae</taxon>
        <taxon>Xenopus</taxon>
        <taxon>Silurana</taxon>
    </lineage>
</organism>
<feature type="chain" id="PRO_0000382595" description="Cytosolic Fe-S cluster assembly factor nubp1">
    <location>
        <begin position="1"/>
        <end position="320"/>
    </location>
</feature>
<feature type="region of interest" description="Disordered" evidence="2">
    <location>
        <begin position="1"/>
        <end position="23"/>
    </location>
</feature>
<feature type="binding site" evidence="1">
    <location>
        <position position="12"/>
    </location>
    <ligand>
        <name>[4Fe-4S] cluster</name>
        <dbReference type="ChEBI" id="CHEBI:49883"/>
        <label>1</label>
    </ligand>
</feature>
<feature type="binding site" evidence="1">
    <location>
        <position position="26"/>
    </location>
    <ligand>
        <name>[4Fe-4S] cluster</name>
        <dbReference type="ChEBI" id="CHEBI:49883"/>
        <label>1</label>
    </ligand>
</feature>
<feature type="binding site" evidence="1">
    <location>
        <position position="29"/>
    </location>
    <ligand>
        <name>[4Fe-4S] cluster</name>
        <dbReference type="ChEBI" id="CHEBI:49883"/>
        <label>1</label>
    </ligand>
</feature>
<feature type="binding site" evidence="1">
    <location>
        <position position="35"/>
    </location>
    <ligand>
        <name>[4Fe-4S] cluster</name>
        <dbReference type="ChEBI" id="CHEBI:49883"/>
        <label>1</label>
    </ligand>
</feature>
<feature type="binding site" evidence="1">
    <location>
        <begin position="66"/>
        <end position="73"/>
    </location>
    <ligand>
        <name>ATP</name>
        <dbReference type="ChEBI" id="CHEBI:30616"/>
    </ligand>
</feature>
<feature type="binding site" evidence="1">
    <location>
        <position position="239"/>
    </location>
    <ligand>
        <name>[4Fe-4S] cluster</name>
        <dbReference type="ChEBI" id="CHEBI:49883"/>
        <label>2</label>
        <note>ligand shared with heterodimeric partner</note>
    </ligand>
</feature>
<feature type="binding site" evidence="1">
    <location>
        <position position="242"/>
    </location>
    <ligand>
        <name>[4Fe-4S] cluster</name>
        <dbReference type="ChEBI" id="CHEBI:49883"/>
        <label>2</label>
        <note>ligand shared with heterodimeric partner</note>
    </ligand>
</feature>
<protein>
    <recommendedName>
        <fullName evidence="1">Cytosolic Fe-S cluster assembly factor nubp1</fullName>
    </recommendedName>
    <alternativeName>
        <fullName evidence="1">Nucleotide-binding protein 1</fullName>
        <shortName evidence="1">NBP 1</shortName>
    </alternativeName>
</protein>
<comment type="function">
    <text evidence="1">Component of the cytosolic iron-sulfur (Fe/S) protein assembly (CIA) machinery. Required for maturation of extramitochondrial Fe-S proteins. The nubp1-nubp2 heterotetramer forms a Fe-S scaffold complex, mediating the de novo assembly of an Fe-S cluster and its transfer to target apoproteins.</text>
</comment>
<comment type="cofactor">
    <cofactor evidence="1">
        <name>[4Fe-4S] cluster</name>
        <dbReference type="ChEBI" id="CHEBI:49883"/>
    </cofactor>
    <text evidence="1">Binds 4 [4Fe-4S] clusters per heterotetramer. Contains two stable clusters in the N-termini of nubp1 and two labile, bridging clusters between subunits of the nubp1-nubp2 heterotetramer.</text>
</comment>
<comment type="subunit">
    <text evidence="1">Heterotetramer of 2 nubp1 and 2 nubp2 chains.</text>
</comment>
<comment type="subcellular location">
    <subcellularLocation>
        <location evidence="1">Cytoplasm</location>
    </subcellularLocation>
</comment>
<comment type="similarity">
    <text evidence="1">Belongs to the Mrp/NBP35 ATP-binding proteins family. NUBP1/NBP35 subfamily.</text>
</comment>
<gene>
    <name type="primary">nubp1</name>
</gene>
<sequence length="320" mass="34211">MADVPINAPQHCPGTGSTEAGKSSACQGCPNQSICASGTMSGPDPAIEEIKEKLSSVKHKILVLSGKGGVGKSTFSAHLAHGLAQDESKEVALLDVDICGPSIPKMMGLEGEQVHQSGSGWSPVYVEDNLAVMSVGFLLSSPDDAVIWRGPKKNGMIKQFLRDVDWGEVDYLIIDTPPGTSDEHLSVVQYLSVAGIDGAVIITTPQEVSLQDVRKEINFCHKVKLPIIGVVENMSGFICPKCKNESQIFPPTTGGAEKMCTDLNVSLLGKVPLDPNIGKSCDTGKSFFSEIPDSPATLSYRTIIQRIQDYCEKKKVTCFS</sequence>
<name>NUBP1_XENTR</name>
<accession>Q5EB25</accession>
<keyword id="KW-0004">4Fe-4S</keyword>
<keyword id="KW-0067">ATP-binding</keyword>
<keyword id="KW-0963">Cytoplasm</keyword>
<keyword id="KW-0408">Iron</keyword>
<keyword id="KW-0411">Iron-sulfur</keyword>
<keyword id="KW-0479">Metal-binding</keyword>
<keyword id="KW-0547">Nucleotide-binding</keyword>
<keyword id="KW-1185">Reference proteome</keyword>
<dbReference type="EMBL" id="BC090123">
    <property type="protein sequence ID" value="AAH90123.1"/>
    <property type="molecule type" value="mRNA"/>
</dbReference>
<dbReference type="RefSeq" id="NP_001015835.1">
    <property type="nucleotide sequence ID" value="NM_001015835.1"/>
</dbReference>
<dbReference type="SMR" id="Q5EB25"/>
<dbReference type="FunCoup" id="Q5EB25">
    <property type="interactions" value="665"/>
</dbReference>
<dbReference type="STRING" id="8364.ENSXETP00000053496"/>
<dbReference type="DNASU" id="548552"/>
<dbReference type="GeneID" id="548552"/>
<dbReference type="KEGG" id="xtr:548552"/>
<dbReference type="AGR" id="Xenbase:XB-GENE-992726"/>
<dbReference type="CTD" id="4682"/>
<dbReference type="Xenbase" id="XB-GENE-992726">
    <property type="gene designation" value="nubp1"/>
</dbReference>
<dbReference type="InParanoid" id="Q5EB25"/>
<dbReference type="OMA" id="VSGCPMR"/>
<dbReference type="OrthoDB" id="1741334at2759"/>
<dbReference type="Proteomes" id="UP000008143">
    <property type="component" value="Chromosome 9"/>
</dbReference>
<dbReference type="GO" id="GO:0005829">
    <property type="term" value="C:cytosol"/>
    <property type="evidence" value="ECO:0000250"/>
    <property type="project" value="UniProtKB"/>
</dbReference>
<dbReference type="GO" id="GO:0051539">
    <property type="term" value="F:4 iron, 4 sulfur cluster binding"/>
    <property type="evidence" value="ECO:0007669"/>
    <property type="project" value="UniProtKB-UniRule"/>
</dbReference>
<dbReference type="GO" id="GO:0005524">
    <property type="term" value="F:ATP binding"/>
    <property type="evidence" value="ECO:0007669"/>
    <property type="project" value="UniProtKB-KW"/>
</dbReference>
<dbReference type="GO" id="GO:0140663">
    <property type="term" value="F:ATP-dependent FeS chaperone activity"/>
    <property type="evidence" value="ECO:0007669"/>
    <property type="project" value="InterPro"/>
</dbReference>
<dbReference type="GO" id="GO:0051536">
    <property type="term" value="F:iron-sulfur cluster binding"/>
    <property type="evidence" value="ECO:0000250"/>
    <property type="project" value="UniProtKB"/>
</dbReference>
<dbReference type="GO" id="GO:0046872">
    <property type="term" value="F:metal ion binding"/>
    <property type="evidence" value="ECO:0007669"/>
    <property type="project" value="UniProtKB-KW"/>
</dbReference>
<dbReference type="GO" id="GO:0016226">
    <property type="term" value="P:iron-sulfur cluster assembly"/>
    <property type="evidence" value="ECO:0000250"/>
    <property type="project" value="UniProtKB"/>
</dbReference>
<dbReference type="CDD" id="cd02037">
    <property type="entry name" value="Mrp_NBP35"/>
    <property type="match status" value="1"/>
</dbReference>
<dbReference type="FunFam" id="3.40.50.300:FF:000427">
    <property type="entry name" value="Cytosolic Fe-S cluster assembly factor NUBP1"/>
    <property type="match status" value="1"/>
</dbReference>
<dbReference type="Gene3D" id="3.40.50.300">
    <property type="entry name" value="P-loop containing nucleotide triphosphate hydrolases"/>
    <property type="match status" value="1"/>
</dbReference>
<dbReference type="HAMAP" id="MF_02040">
    <property type="entry name" value="Mrp_NBP35"/>
    <property type="match status" value="1"/>
</dbReference>
<dbReference type="HAMAP" id="MF_03038">
    <property type="entry name" value="NUBP1"/>
    <property type="match status" value="1"/>
</dbReference>
<dbReference type="InterPro" id="IPR000808">
    <property type="entry name" value="Mrp-like_CS"/>
</dbReference>
<dbReference type="InterPro" id="IPR019591">
    <property type="entry name" value="Mrp/NBP35_ATP-bd"/>
</dbReference>
<dbReference type="InterPro" id="IPR028601">
    <property type="entry name" value="NUBP1/Nbp35"/>
</dbReference>
<dbReference type="InterPro" id="IPR027417">
    <property type="entry name" value="P-loop_NTPase"/>
</dbReference>
<dbReference type="InterPro" id="IPR033756">
    <property type="entry name" value="YlxH/NBP35"/>
</dbReference>
<dbReference type="PANTHER" id="PTHR23264:SF35">
    <property type="entry name" value="CYTOSOLIC FE-S CLUSTER ASSEMBLY FACTOR NUBP1"/>
    <property type="match status" value="1"/>
</dbReference>
<dbReference type="PANTHER" id="PTHR23264">
    <property type="entry name" value="NUCLEOTIDE-BINDING PROTEIN NBP35 YEAST -RELATED"/>
    <property type="match status" value="1"/>
</dbReference>
<dbReference type="Pfam" id="PF10609">
    <property type="entry name" value="ParA"/>
    <property type="match status" value="1"/>
</dbReference>
<dbReference type="SUPFAM" id="SSF52540">
    <property type="entry name" value="P-loop containing nucleoside triphosphate hydrolases"/>
    <property type="match status" value="1"/>
</dbReference>
<dbReference type="PROSITE" id="PS01215">
    <property type="entry name" value="MRP"/>
    <property type="match status" value="1"/>
</dbReference>
<proteinExistence type="evidence at transcript level"/>
<reference key="1">
    <citation type="submission" date="2005-02" db="EMBL/GenBank/DDBJ databases">
        <authorList>
            <consortium name="NIH - Xenopus Gene Collection (XGC) project"/>
        </authorList>
    </citation>
    <scope>NUCLEOTIDE SEQUENCE [LARGE SCALE MRNA]</scope>
    <source>
        <tissue>Embryo</tissue>
    </source>
</reference>